<dbReference type="EC" id="3.5.1.47" evidence="1"/>
<dbReference type="EMBL" id="AJ222587">
    <property type="protein sequence ID" value="CAA10881.1"/>
    <property type="molecule type" value="Genomic_DNA"/>
</dbReference>
<dbReference type="EMBL" id="AL009126">
    <property type="protein sequence ID" value="CAB13292.1"/>
    <property type="molecule type" value="Genomic_DNA"/>
</dbReference>
<dbReference type="PIR" id="G69866">
    <property type="entry name" value="G69866"/>
</dbReference>
<dbReference type="RefSeq" id="WP_003232383.1">
    <property type="nucleotide sequence ID" value="NZ_OZ025638.1"/>
</dbReference>
<dbReference type="SMR" id="O34916"/>
<dbReference type="FunCoup" id="O34916">
    <property type="interactions" value="216"/>
</dbReference>
<dbReference type="STRING" id="224308.BSU14190"/>
<dbReference type="MEROPS" id="M20.A27"/>
<dbReference type="PaxDb" id="224308-BSU14190"/>
<dbReference type="EnsemblBacteria" id="CAB13292">
    <property type="protein sequence ID" value="CAB13292"/>
    <property type="gene ID" value="BSU_14190"/>
</dbReference>
<dbReference type="GeneID" id="938805"/>
<dbReference type="KEGG" id="bsu:BSU14190"/>
<dbReference type="PATRIC" id="fig|224308.179.peg.1548"/>
<dbReference type="eggNOG" id="COG1473">
    <property type="taxonomic scope" value="Bacteria"/>
</dbReference>
<dbReference type="InParanoid" id="O34916"/>
<dbReference type="OrthoDB" id="9776731at2"/>
<dbReference type="PhylomeDB" id="O34916"/>
<dbReference type="BioCyc" id="BSUB:BSU14190-MONOMER"/>
<dbReference type="BioCyc" id="MetaCyc:MONOMER-6604"/>
<dbReference type="UniPathway" id="UPA00034">
    <property type="reaction ID" value="UER00024"/>
</dbReference>
<dbReference type="Proteomes" id="UP000001570">
    <property type="component" value="Chromosome"/>
</dbReference>
<dbReference type="GO" id="GO:0050118">
    <property type="term" value="F:N-acetyldiaminopimelate deacetylase activity"/>
    <property type="evidence" value="ECO:0000314"/>
    <property type="project" value="UniProtKB"/>
</dbReference>
<dbReference type="GO" id="GO:0019877">
    <property type="term" value="P:diaminopimelate biosynthetic process"/>
    <property type="evidence" value="ECO:0000314"/>
    <property type="project" value="UniProtKB"/>
</dbReference>
<dbReference type="GO" id="GO:0009089">
    <property type="term" value="P:lysine biosynthetic process via diaminopimelate"/>
    <property type="evidence" value="ECO:0000250"/>
    <property type="project" value="UniProtKB"/>
</dbReference>
<dbReference type="CDD" id="cd05670">
    <property type="entry name" value="M20_Acy1_YkuR-like"/>
    <property type="match status" value="1"/>
</dbReference>
<dbReference type="FunFam" id="3.30.70.360:FF:000001">
    <property type="entry name" value="N-acetyldiaminopimelate deacetylase"/>
    <property type="match status" value="1"/>
</dbReference>
<dbReference type="Gene3D" id="3.30.70.360">
    <property type="match status" value="1"/>
</dbReference>
<dbReference type="Gene3D" id="3.40.630.10">
    <property type="entry name" value="Zn peptidases"/>
    <property type="match status" value="1"/>
</dbReference>
<dbReference type="HAMAP" id="MF_01692">
    <property type="entry name" value="DapEL"/>
    <property type="match status" value="1"/>
</dbReference>
<dbReference type="InterPro" id="IPR023905">
    <property type="entry name" value="AcetylDAP_deacetylase"/>
</dbReference>
<dbReference type="InterPro" id="IPR017439">
    <property type="entry name" value="Amidohydrolase"/>
</dbReference>
<dbReference type="InterPro" id="IPR036264">
    <property type="entry name" value="Bact_exopeptidase_dim_dom"/>
</dbReference>
<dbReference type="InterPro" id="IPR002933">
    <property type="entry name" value="Peptidase_M20"/>
</dbReference>
<dbReference type="InterPro" id="IPR011650">
    <property type="entry name" value="Peptidase_M20_dimer"/>
</dbReference>
<dbReference type="NCBIfam" id="TIGR01891">
    <property type="entry name" value="amidohydrolases"/>
    <property type="match status" value="1"/>
</dbReference>
<dbReference type="PANTHER" id="PTHR11014:SF98">
    <property type="entry name" value="N-ACETYLDIAMINOPIMELATE DEACETYLASE"/>
    <property type="match status" value="1"/>
</dbReference>
<dbReference type="PANTHER" id="PTHR11014">
    <property type="entry name" value="PEPTIDASE M20 FAMILY MEMBER"/>
    <property type="match status" value="1"/>
</dbReference>
<dbReference type="Pfam" id="PF07687">
    <property type="entry name" value="M20_dimer"/>
    <property type="match status" value="1"/>
</dbReference>
<dbReference type="Pfam" id="PF01546">
    <property type="entry name" value="Peptidase_M20"/>
    <property type="match status" value="1"/>
</dbReference>
<dbReference type="PIRSF" id="PIRSF005962">
    <property type="entry name" value="Pept_M20D_amidohydro"/>
    <property type="match status" value="1"/>
</dbReference>
<dbReference type="SUPFAM" id="SSF55031">
    <property type="entry name" value="Bacterial exopeptidase dimerisation domain"/>
    <property type="match status" value="1"/>
</dbReference>
<dbReference type="SUPFAM" id="SSF53187">
    <property type="entry name" value="Zn-dependent exopeptidases"/>
    <property type="match status" value="1"/>
</dbReference>
<name>DAPEL_BACSU</name>
<feature type="chain" id="PRO_0000360658" description="N-acetyldiaminopimelate deacetylase">
    <location>
        <begin position="1"/>
        <end position="374"/>
    </location>
</feature>
<feature type="active site" evidence="1">
    <location>
        <position position="69"/>
    </location>
</feature>
<feature type="active site" description="Proton acceptor" evidence="1">
    <location>
        <position position="128"/>
    </location>
</feature>
<gene>
    <name type="primary">ykuR</name>
    <name type="synonym">dapL</name>
    <name type="ordered locus">BSU14190</name>
</gene>
<evidence type="ECO:0000255" key="1">
    <source>
        <dbReference type="HAMAP-Rule" id="MF_01692"/>
    </source>
</evidence>
<evidence type="ECO:0000269" key="2">
    <source>
    </source>
</evidence>
<organism>
    <name type="scientific">Bacillus subtilis (strain 168)</name>
    <dbReference type="NCBI Taxonomy" id="224308"/>
    <lineage>
        <taxon>Bacteria</taxon>
        <taxon>Bacillati</taxon>
        <taxon>Bacillota</taxon>
        <taxon>Bacilli</taxon>
        <taxon>Bacillales</taxon>
        <taxon>Bacillaceae</taxon>
        <taxon>Bacillus</taxon>
    </lineage>
</organism>
<reference key="1">
    <citation type="submission" date="1997-11" db="EMBL/GenBank/DDBJ databases">
        <title>Sequence of the Bacillus subtilis chromosome from ykuA to cse-15.</title>
        <authorList>
            <person name="Scanlan E."/>
            <person name="Devine K.M."/>
        </authorList>
    </citation>
    <scope>NUCLEOTIDE SEQUENCE [GENOMIC DNA]</scope>
    <source>
        <strain>168</strain>
    </source>
</reference>
<reference key="2">
    <citation type="journal article" date="1997" name="Nature">
        <title>The complete genome sequence of the Gram-positive bacterium Bacillus subtilis.</title>
        <authorList>
            <person name="Kunst F."/>
            <person name="Ogasawara N."/>
            <person name="Moszer I."/>
            <person name="Albertini A.M."/>
            <person name="Alloni G."/>
            <person name="Azevedo V."/>
            <person name="Bertero M.G."/>
            <person name="Bessieres P."/>
            <person name="Bolotin A."/>
            <person name="Borchert S."/>
            <person name="Borriss R."/>
            <person name="Boursier L."/>
            <person name="Brans A."/>
            <person name="Braun M."/>
            <person name="Brignell S.C."/>
            <person name="Bron S."/>
            <person name="Brouillet S."/>
            <person name="Bruschi C.V."/>
            <person name="Caldwell B."/>
            <person name="Capuano V."/>
            <person name="Carter N.M."/>
            <person name="Choi S.-K."/>
            <person name="Codani J.-J."/>
            <person name="Connerton I.F."/>
            <person name="Cummings N.J."/>
            <person name="Daniel R.A."/>
            <person name="Denizot F."/>
            <person name="Devine K.M."/>
            <person name="Duesterhoeft A."/>
            <person name="Ehrlich S.D."/>
            <person name="Emmerson P.T."/>
            <person name="Entian K.-D."/>
            <person name="Errington J."/>
            <person name="Fabret C."/>
            <person name="Ferrari E."/>
            <person name="Foulger D."/>
            <person name="Fritz C."/>
            <person name="Fujita M."/>
            <person name="Fujita Y."/>
            <person name="Fuma S."/>
            <person name="Galizzi A."/>
            <person name="Galleron N."/>
            <person name="Ghim S.-Y."/>
            <person name="Glaser P."/>
            <person name="Goffeau A."/>
            <person name="Golightly E.J."/>
            <person name="Grandi G."/>
            <person name="Guiseppi G."/>
            <person name="Guy B.J."/>
            <person name="Haga K."/>
            <person name="Haiech J."/>
            <person name="Harwood C.R."/>
            <person name="Henaut A."/>
            <person name="Hilbert H."/>
            <person name="Holsappel S."/>
            <person name="Hosono S."/>
            <person name="Hullo M.-F."/>
            <person name="Itaya M."/>
            <person name="Jones L.-M."/>
            <person name="Joris B."/>
            <person name="Karamata D."/>
            <person name="Kasahara Y."/>
            <person name="Klaerr-Blanchard M."/>
            <person name="Klein C."/>
            <person name="Kobayashi Y."/>
            <person name="Koetter P."/>
            <person name="Koningstein G."/>
            <person name="Krogh S."/>
            <person name="Kumano M."/>
            <person name="Kurita K."/>
            <person name="Lapidus A."/>
            <person name="Lardinois S."/>
            <person name="Lauber J."/>
            <person name="Lazarevic V."/>
            <person name="Lee S.-M."/>
            <person name="Levine A."/>
            <person name="Liu H."/>
            <person name="Masuda S."/>
            <person name="Mauel C."/>
            <person name="Medigue C."/>
            <person name="Medina N."/>
            <person name="Mellado R.P."/>
            <person name="Mizuno M."/>
            <person name="Moestl D."/>
            <person name="Nakai S."/>
            <person name="Noback M."/>
            <person name="Noone D."/>
            <person name="O'Reilly M."/>
            <person name="Ogawa K."/>
            <person name="Ogiwara A."/>
            <person name="Oudega B."/>
            <person name="Park S.-H."/>
            <person name="Parro V."/>
            <person name="Pohl T.M."/>
            <person name="Portetelle D."/>
            <person name="Porwollik S."/>
            <person name="Prescott A.M."/>
            <person name="Presecan E."/>
            <person name="Pujic P."/>
            <person name="Purnelle B."/>
            <person name="Rapoport G."/>
            <person name="Rey M."/>
            <person name="Reynolds S."/>
            <person name="Rieger M."/>
            <person name="Rivolta C."/>
            <person name="Rocha E."/>
            <person name="Roche B."/>
            <person name="Rose M."/>
            <person name="Sadaie Y."/>
            <person name="Sato T."/>
            <person name="Scanlan E."/>
            <person name="Schleich S."/>
            <person name="Schroeter R."/>
            <person name="Scoffone F."/>
            <person name="Sekiguchi J."/>
            <person name="Sekowska A."/>
            <person name="Seror S.J."/>
            <person name="Serror P."/>
            <person name="Shin B.-S."/>
            <person name="Soldo B."/>
            <person name="Sorokin A."/>
            <person name="Tacconi E."/>
            <person name="Takagi T."/>
            <person name="Takahashi H."/>
            <person name="Takemaru K."/>
            <person name="Takeuchi M."/>
            <person name="Tamakoshi A."/>
            <person name="Tanaka T."/>
            <person name="Terpstra P."/>
            <person name="Tognoni A."/>
            <person name="Tosato V."/>
            <person name="Uchiyama S."/>
            <person name="Vandenbol M."/>
            <person name="Vannier F."/>
            <person name="Vassarotti A."/>
            <person name="Viari A."/>
            <person name="Wambutt R."/>
            <person name="Wedler E."/>
            <person name="Wedler H."/>
            <person name="Weitzenegger T."/>
            <person name="Winters P."/>
            <person name="Wipat A."/>
            <person name="Yamamoto H."/>
            <person name="Yamane K."/>
            <person name="Yasumoto K."/>
            <person name="Yata K."/>
            <person name="Yoshida K."/>
            <person name="Yoshikawa H.-F."/>
            <person name="Zumstein E."/>
            <person name="Yoshikawa H."/>
            <person name="Danchin A."/>
        </authorList>
    </citation>
    <scope>NUCLEOTIDE SEQUENCE [LARGE SCALE GENOMIC DNA]</scope>
    <source>
        <strain>168</strain>
    </source>
</reference>
<reference key="3">
    <citation type="journal article" date="1970" name="J. Bacteriol.">
        <title>Bacterial distribution of the use of succinyl and acetyl blocking groups in diaminopimelic acid biosynthesis.</title>
        <authorList>
            <person name="Weinberger S."/>
            <person name="Gilvarg C."/>
        </authorList>
    </citation>
    <scope>FUNCTION AS A N-ACETYLDIAMINOPIMELATE DEACETYLASE AND IN DIAMINOPIMELATE BIOSYNTHESIS</scope>
    <source>
        <strain>168</strain>
    </source>
</reference>
<keyword id="KW-0028">Amino-acid biosynthesis</keyword>
<keyword id="KW-0220">Diaminopimelate biosynthesis</keyword>
<keyword id="KW-0378">Hydrolase</keyword>
<keyword id="KW-0457">Lysine biosynthesis</keyword>
<keyword id="KW-1185">Reference proteome</keyword>
<protein>
    <recommendedName>
        <fullName evidence="1">N-acetyldiaminopimelate deacetylase</fullName>
        <ecNumber evidence="1">3.5.1.47</ecNumber>
    </recommendedName>
</protein>
<comment type="function">
    <text evidence="1 2">Catalyzes the conversion of N-acetyl-diaminopimelate to diaminopimelate and acetate.</text>
</comment>
<comment type="catalytic activity">
    <reaction evidence="1">
        <text>N-acetyl-(2S,6S)-2,6-diaminopimelate + H2O = (2S,6S)-2,6-diaminopimelate + acetate</text>
        <dbReference type="Rhea" id="RHEA:20405"/>
        <dbReference type="ChEBI" id="CHEBI:15377"/>
        <dbReference type="ChEBI" id="CHEBI:30089"/>
        <dbReference type="ChEBI" id="CHEBI:57609"/>
        <dbReference type="ChEBI" id="CHEBI:58767"/>
        <dbReference type="EC" id="3.5.1.47"/>
    </reaction>
</comment>
<comment type="pathway">
    <text evidence="1">Amino-acid biosynthesis; L-lysine biosynthesis via DAP pathway; LL-2,6-diaminopimelate from (S)-tetrahydrodipicolinate (acetylase route): step 3/3.</text>
</comment>
<comment type="similarity">
    <text evidence="1">Belongs to the peptidase M20A family. N-acetyldiaminopimelate deacetylase subfamily.</text>
</comment>
<sequence length="374" mass="41557">MKIEELIAIRRDLHRIPELGFQEFKTQQYLLNVLEQYPQDRIEIEKWRTGLFVKVNGTAPEKMLAYRADIDALSIEEQTGLPFASEHHGNMHACGHDLHMTIALGIIDHFVHHPVKHDLLFLFQPAEEGPGGAEPMLESDVLKKWQPDFITALHIAPELPVGTIATKSGLLFANTSELVIDLEGKGGHAAYPHLAEDMVVAASTLVTQLQTIISRNTDPLDSAVITVGTITGGSAQNIIAETAHLEGTIRTLSEESMKQVKERIEDVVKGIEIGFRCKGKVTYPSVYHQVYNTSGLTEEFMSFVAEHQLATVIEAKEAMTGEDFGYMLKKYPGFMFWLGADSEHGLHHAKLNPDENAIETAVHVMTGYFSVYAN</sequence>
<proteinExistence type="evidence at protein level"/>
<accession>O34916</accession>
<accession>Q796K0</accession>